<proteinExistence type="inferred from homology"/>
<organism>
    <name type="scientific">Pseudomonas syringae pv. tomato (strain ATCC BAA-871 / DC3000)</name>
    <dbReference type="NCBI Taxonomy" id="223283"/>
    <lineage>
        <taxon>Bacteria</taxon>
        <taxon>Pseudomonadati</taxon>
        <taxon>Pseudomonadota</taxon>
        <taxon>Gammaproteobacteria</taxon>
        <taxon>Pseudomonadales</taxon>
        <taxon>Pseudomonadaceae</taxon>
        <taxon>Pseudomonas</taxon>
    </lineage>
</organism>
<name>ENGB_PSESM</name>
<comment type="function">
    <text evidence="1">Necessary for normal cell division and for the maintenance of normal septation.</text>
</comment>
<comment type="cofactor">
    <cofactor evidence="1">
        <name>Mg(2+)</name>
        <dbReference type="ChEBI" id="CHEBI:18420"/>
    </cofactor>
</comment>
<comment type="similarity">
    <text evidence="1">Belongs to the TRAFAC class TrmE-Era-EngA-EngB-Septin-like GTPase superfamily. EngB GTPase family.</text>
</comment>
<dbReference type="EMBL" id="AE016853">
    <property type="protein sequence ID" value="AAO53888.1"/>
    <property type="molecule type" value="Genomic_DNA"/>
</dbReference>
<dbReference type="RefSeq" id="NP_790193.1">
    <property type="nucleotide sequence ID" value="NC_004578.1"/>
</dbReference>
<dbReference type="SMR" id="Q88AP4"/>
<dbReference type="STRING" id="223283.PSPTO_0343"/>
<dbReference type="KEGG" id="pst:PSPTO_0343"/>
<dbReference type="PATRIC" id="fig|223283.9.peg.358"/>
<dbReference type="eggNOG" id="COG0218">
    <property type="taxonomic scope" value="Bacteria"/>
</dbReference>
<dbReference type="HOGENOM" id="CLU_033732_1_0_6"/>
<dbReference type="OrthoDB" id="9804921at2"/>
<dbReference type="PhylomeDB" id="Q88AP4"/>
<dbReference type="Proteomes" id="UP000002515">
    <property type="component" value="Chromosome"/>
</dbReference>
<dbReference type="GO" id="GO:0005829">
    <property type="term" value="C:cytosol"/>
    <property type="evidence" value="ECO:0007669"/>
    <property type="project" value="TreeGrafter"/>
</dbReference>
<dbReference type="GO" id="GO:0005525">
    <property type="term" value="F:GTP binding"/>
    <property type="evidence" value="ECO:0007669"/>
    <property type="project" value="UniProtKB-UniRule"/>
</dbReference>
<dbReference type="GO" id="GO:0046872">
    <property type="term" value="F:metal ion binding"/>
    <property type="evidence" value="ECO:0007669"/>
    <property type="project" value="UniProtKB-KW"/>
</dbReference>
<dbReference type="GO" id="GO:0000917">
    <property type="term" value="P:division septum assembly"/>
    <property type="evidence" value="ECO:0007669"/>
    <property type="project" value="UniProtKB-KW"/>
</dbReference>
<dbReference type="CDD" id="cd01876">
    <property type="entry name" value="YihA_EngB"/>
    <property type="match status" value="1"/>
</dbReference>
<dbReference type="FunFam" id="3.40.50.300:FF:000098">
    <property type="entry name" value="Probable GTP-binding protein EngB"/>
    <property type="match status" value="1"/>
</dbReference>
<dbReference type="Gene3D" id="3.40.50.300">
    <property type="entry name" value="P-loop containing nucleotide triphosphate hydrolases"/>
    <property type="match status" value="1"/>
</dbReference>
<dbReference type="HAMAP" id="MF_00321">
    <property type="entry name" value="GTPase_EngB"/>
    <property type="match status" value="1"/>
</dbReference>
<dbReference type="InterPro" id="IPR030393">
    <property type="entry name" value="G_ENGB_dom"/>
</dbReference>
<dbReference type="InterPro" id="IPR006073">
    <property type="entry name" value="GTP-bd"/>
</dbReference>
<dbReference type="InterPro" id="IPR019987">
    <property type="entry name" value="GTP-bd_ribosome_bio_YsxC"/>
</dbReference>
<dbReference type="InterPro" id="IPR027417">
    <property type="entry name" value="P-loop_NTPase"/>
</dbReference>
<dbReference type="NCBIfam" id="TIGR03598">
    <property type="entry name" value="GTPase_YsxC"/>
    <property type="match status" value="1"/>
</dbReference>
<dbReference type="PANTHER" id="PTHR11649:SF13">
    <property type="entry name" value="ENGB-TYPE G DOMAIN-CONTAINING PROTEIN"/>
    <property type="match status" value="1"/>
</dbReference>
<dbReference type="PANTHER" id="PTHR11649">
    <property type="entry name" value="MSS1/TRME-RELATED GTP-BINDING PROTEIN"/>
    <property type="match status" value="1"/>
</dbReference>
<dbReference type="Pfam" id="PF01926">
    <property type="entry name" value="MMR_HSR1"/>
    <property type="match status" value="1"/>
</dbReference>
<dbReference type="SUPFAM" id="SSF52540">
    <property type="entry name" value="P-loop containing nucleoside triphosphate hydrolases"/>
    <property type="match status" value="1"/>
</dbReference>
<dbReference type="PROSITE" id="PS51706">
    <property type="entry name" value="G_ENGB"/>
    <property type="match status" value="1"/>
</dbReference>
<feature type="chain" id="PRO_0000157772" description="Probable GTP-binding protein EngB">
    <location>
        <begin position="1"/>
        <end position="211"/>
    </location>
</feature>
<feature type="domain" description="EngB-type G" evidence="1">
    <location>
        <begin position="30"/>
        <end position="204"/>
    </location>
</feature>
<feature type="binding site" evidence="1">
    <location>
        <begin position="38"/>
        <end position="45"/>
    </location>
    <ligand>
        <name>GTP</name>
        <dbReference type="ChEBI" id="CHEBI:37565"/>
    </ligand>
</feature>
<feature type="binding site" evidence="1">
    <location>
        <position position="45"/>
    </location>
    <ligand>
        <name>Mg(2+)</name>
        <dbReference type="ChEBI" id="CHEBI:18420"/>
    </ligand>
</feature>
<feature type="binding site" evidence="1">
    <location>
        <begin position="64"/>
        <end position="68"/>
    </location>
    <ligand>
        <name>GTP</name>
        <dbReference type="ChEBI" id="CHEBI:37565"/>
    </ligand>
</feature>
<feature type="binding site" evidence="1">
    <location>
        <position position="66"/>
    </location>
    <ligand>
        <name>Mg(2+)</name>
        <dbReference type="ChEBI" id="CHEBI:18420"/>
    </ligand>
</feature>
<feature type="binding site" evidence="1">
    <location>
        <begin position="82"/>
        <end position="85"/>
    </location>
    <ligand>
        <name>GTP</name>
        <dbReference type="ChEBI" id="CHEBI:37565"/>
    </ligand>
</feature>
<feature type="binding site" evidence="1">
    <location>
        <begin position="149"/>
        <end position="152"/>
    </location>
    <ligand>
        <name>GTP</name>
        <dbReference type="ChEBI" id="CHEBI:37565"/>
    </ligand>
</feature>
<feature type="binding site" evidence="1">
    <location>
        <begin position="182"/>
        <end position="185"/>
    </location>
    <ligand>
        <name>GTP</name>
        <dbReference type="ChEBI" id="CHEBI:37565"/>
    </ligand>
</feature>
<sequence length="211" mass="23457">MQLKNPILGLCQQATFMLSAAKVDQCPDDEGFEVAFAGRSNAGKSSALNTLTHASLARTSKTPGRTQLLNFFGLDEDRRLVDLPGYGYAKVPIPLKLHWQRHLEAYLGSRESLKGLILMMDIRHPMTDFDLLMLDWAIASHMPMHILLTKADKLTYGAAKNTLLKVQAEIRKGWGDAVSIQLFSAPKRMGLEEAYTVLAGWMELEDKAPAE</sequence>
<reference key="1">
    <citation type="journal article" date="2003" name="Proc. Natl. Acad. Sci. U.S.A.">
        <title>The complete genome sequence of the Arabidopsis and tomato pathogen Pseudomonas syringae pv. tomato DC3000.</title>
        <authorList>
            <person name="Buell C.R."/>
            <person name="Joardar V."/>
            <person name="Lindeberg M."/>
            <person name="Selengut J."/>
            <person name="Paulsen I.T."/>
            <person name="Gwinn M.L."/>
            <person name="Dodson R.J."/>
            <person name="DeBoy R.T."/>
            <person name="Durkin A.S."/>
            <person name="Kolonay J.F."/>
            <person name="Madupu R."/>
            <person name="Daugherty S.C."/>
            <person name="Brinkac L.M."/>
            <person name="Beanan M.J."/>
            <person name="Haft D.H."/>
            <person name="Nelson W.C."/>
            <person name="Davidsen T.M."/>
            <person name="Zafar N."/>
            <person name="Zhou L."/>
            <person name="Liu J."/>
            <person name="Yuan Q."/>
            <person name="Khouri H.M."/>
            <person name="Fedorova N.B."/>
            <person name="Tran B."/>
            <person name="Russell D."/>
            <person name="Berry K.J."/>
            <person name="Utterback T.R."/>
            <person name="Van Aken S.E."/>
            <person name="Feldblyum T.V."/>
            <person name="D'Ascenzo M."/>
            <person name="Deng W.-L."/>
            <person name="Ramos A.R."/>
            <person name="Alfano J.R."/>
            <person name="Cartinhour S."/>
            <person name="Chatterjee A.K."/>
            <person name="Delaney T.P."/>
            <person name="Lazarowitz S.G."/>
            <person name="Martin G.B."/>
            <person name="Schneider D.J."/>
            <person name="Tang X."/>
            <person name="Bender C.L."/>
            <person name="White O."/>
            <person name="Fraser C.M."/>
            <person name="Collmer A."/>
        </authorList>
    </citation>
    <scope>NUCLEOTIDE SEQUENCE [LARGE SCALE GENOMIC DNA]</scope>
    <source>
        <strain>ATCC BAA-871 / DC3000</strain>
    </source>
</reference>
<keyword id="KW-0131">Cell cycle</keyword>
<keyword id="KW-0132">Cell division</keyword>
<keyword id="KW-0342">GTP-binding</keyword>
<keyword id="KW-0460">Magnesium</keyword>
<keyword id="KW-0479">Metal-binding</keyword>
<keyword id="KW-0547">Nucleotide-binding</keyword>
<keyword id="KW-1185">Reference proteome</keyword>
<keyword id="KW-0717">Septation</keyword>
<evidence type="ECO:0000255" key="1">
    <source>
        <dbReference type="HAMAP-Rule" id="MF_00321"/>
    </source>
</evidence>
<accession>Q88AP4</accession>
<gene>
    <name evidence="1" type="primary">engB</name>
    <name type="ordered locus">PSPTO_0343</name>
</gene>
<protein>
    <recommendedName>
        <fullName evidence="1">Probable GTP-binding protein EngB</fullName>
    </recommendedName>
</protein>